<name>HRCA_SYNP6</name>
<protein>
    <recommendedName>
        <fullName evidence="1">Heat-inducible transcription repressor HrcA</fullName>
    </recommendedName>
</protein>
<proteinExistence type="inferred from homology"/>
<comment type="function">
    <text evidence="1">Negative regulator of class I heat shock genes (grpE-dnaK-dnaJ and groELS operons). Prevents heat-shock induction of these operons.</text>
</comment>
<comment type="similarity">
    <text evidence="1">Belongs to the HrcA family.</text>
</comment>
<dbReference type="EMBL" id="AP008231">
    <property type="protein sequence ID" value="BAD79098.1"/>
    <property type="molecule type" value="Genomic_DNA"/>
</dbReference>
<dbReference type="RefSeq" id="WP_011243220.1">
    <property type="nucleotide sequence ID" value="NZ_CP085785.1"/>
</dbReference>
<dbReference type="SMR" id="Q5N3M2"/>
<dbReference type="GeneID" id="72429448"/>
<dbReference type="KEGG" id="syc:syc0908_c"/>
<dbReference type="eggNOG" id="COG1420">
    <property type="taxonomic scope" value="Bacteria"/>
</dbReference>
<dbReference type="Proteomes" id="UP000001175">
    <property type="component" value="Chromosome"/>
</dbReference>
<dbReference type="GO" id="GO:0003677">
    <property type="term" value="F:DNA binding"/>
    <property type="evidence" value="ECO:0007669"/>
    <property type="project" value="InterPro"/>
</dbReference>
<dbReference type="GO" id="GO:0045892">
    <property type="term" value="P:negative regulation of DNA-templated transcription"/>
    <property type="evidence" value="ECO:0007669"/>
    <property type="project" value="UniProtKB-UniRule"/>
</dbReference>
<dbReference type="Gene3D" id="3.30.450.40">
    <property type="match status" value="1"/>
</dbReference>
<dbReference type="Gene3D" id="3.30.390.60">
    <property type="entry name" value="Heat-inducible transcription repressor hrca homolog, domain 3"/>
    <property type="match status" value="1"/>
</dbReference>
<dbReference type="Gene3D" id="1.10.10.10">
    <property type="entry name" value="Winged helix-like DNA-binding domain superfamily/Winged helix DNA-binding domain"/>
    <property type="match status" value="1"/>
</dbReference>
<dbReference type="HAMAP" id="MF_00081">
    <property type="entry name" value="HrcA"/>
    <property type="match status" value="1"/>
</dbReference>
<dbReference type="InterPro" id="IPR029016">
    <property type="entry name" value="GAF-like_dom_sf"/>
</dbReference>
<dbReference type="InterPro" id="IPR002571">
    <property type="entry name" value="HrcA"/>
</dbReference>
<dbReference type="InterPro" id="IPR021153">
    <property type="entry name" value="HrcA_C"/>
</dbReference>
<dbReference type="InterPro" id="IPR036388">
    <property type="entry name" value="WH-like_DNA-bd_sf"/>
</dbReference>
<dbReference type="InterPro" id="IPR036390">
    <property type="entry name" value="WH_DNA-bd_sf"/>
</dbReference>
<dbReference type="InterPro" id="IPR023120">
    <property type="entry name" value="WHTH_transcript_rep_HrcA_IDD"/>
</dbReference>
<dbReference type="NCBIfam" id="TIGR00331">
    <property type="entry name" value="hrcA"/>
    <property type="match status" value="1"/>
</dbReference>
<dbReference type="PANTHER" id="PTHR34824">
    <property type="entry name" value="HEAT-INDUCIBLE TRANSCRIPTION REPRESSOR HRCA"/>
    <property type="match status" value="1"/>
</dbReference>
<dbReference type="PANTHER" id="PTHR34824:SF1">
    <property type="entry name" value="HEAT-INDUCIBLE TRANSCRIPTION REPRESSOR HRCA"/>
    <property type="match status" value="1"/>
</dbReference>
<dbReference type="Pfam" id="PF01628">
    <property type="entry name" value="HrcA"/>
    <property type="match status" value="1"/>
</dbReference>
<dbReference type="PIRSF" id="PIRSF005485">
    <property type="entry name" value="HrcA"/>
    <property type="match status" value="1"/>
</dbReference>
<dbReference type="SUPFAM" id="SSF55781">
    <property type="entry name" value="GAF domain-like"/>
    <property type="match status" value="1"/>
</dbReference>
<dbReference type="SUPFAM" id="SSF46785">
    <property type="entry name" value="Winged helix' DNA-binding domain"/>
    <property type="match status" value="1"/>
</dbReference>
<gene>
    <name evidence="1" type="primary">hrcA</name>
    <name type="ordered locus">syc0908_c</name>
</gene>
<accession>Q5N3M2</accession>
<keyword id="KW-0678">Repressor</keyword>
<keyword id="KW-0346">Stress response</keyword>
<keyword id="KW-0804">Transcription</keyword>
<keyword id="KW-0805">Transcription regulation</keyword>
<sequence>MLVSRLTARQQTILSATVRHYVRTAEPVGSKALAEQYGLSVSAATIRNAMGVLERAGLLYQPHTSAGRVPSEGGYRLYVDQLMEPDRALQRQTEQQLSQQLPDRRQSLEALLRGAAQILASLSGYLSLITFPLGLEFQVRHLQLVAIAPHQVLLIVVNDSYETQSALLTLPELDRDLEADQLDRQLLLLSNFLNQELQGRSLQALANLDWPVLGSELQSLAGILQQGLQDLEKRWQPTPATSLLVCGLADLLRQPEFNELQQVQALLELLEGEQTQLLPLMLADPAADQVRVRIGSELPLAPIRSCSLVSAFYCREQQPVGSVSLIGPTRMLYENAVAAVEATASYLSEAIAS</sequence>
<reference key="1">
    <citation type="journal article" date="2007" name="Photosyn. Res.">
        <title>Complete nucleotide sequence of the freshwater unicellular cyanobacterium Synechococcus elongatus PCC 6301 chromosome: gene content and organization.</title>
        <authorList>
            <person name="Sugita C."/>
            <person name="Ogata K."/>
            <person name="Shikata M."/>
            <person name="Jikuya H."/>
            <person name="Takano J."/>
            <person name="Furumichi M."/>
            <person name="Kanehisa M."/>
            <person name="Omata T."/>
            <person name="Sugiura M."/>
            <person name="Sugita M."/>
        </authorList>
    </citation>
    <scope>NUCLEOTIDE SEQUENCE [LARGE SCALE GENOMIC DNA]</scope>
    <source>
        <strain>ATCC 27144 / PCC 6301 / SAUG 1402/1</strain>
    </source>
</reference>
<evidence type="ECO:0000255" key="1">
    <source>
        <dbReference type="HAMAP-Rule" id="MF_00081"/>
    </source>
</evidence>
<feature type="chain" id="PRO_0000182548" description="Heat-inducible transcription repressor HrcA">
    <location>
        <begin position="1"/>
        <end position="353"/>
    </location>
</feature>
<organism>
    <name type="scientific">Synechococcus sp. (strain ATCC 27144 / PCC 6301 / SAUG 1402/1)</name>
    <name type="common">Anacystis nidulans</name>
    <dbReference type="NCBI Taxonomy" id="269084"/>
    <lineage>
        <taxon>Bacteria</taxon>
        <taxon>Bacillati</taxon>
        <taxon>Cyanobacteriota</taxon>
        <taxon>Cyanophyceae</taxon>
        <taxon>Synechococcales</taxon>
        <taxon>Synechococcaceae</taxon>
        <taxon>Synechococcus</taxon>
    </lineage>
</organism>